<sequence length="951" mass="108226">MMTSNILSRFLPPNGSPSVYETLRQQDAESNPSDVEERAGLEFEDDRRTQFSDRELEEAMVDAARDGIRSPSPSPSEPFLTQRSPQRTSGTATAKTGGRRRKHSRPRWMHQDPDDGDDDVPPSLLVEGHQDDDEMRSRLPPPPPSHRHPQRELSPAPGPSSRADRARWNTTREQLPLHNDGRGQRPGVIWSLGHPNLASVDPKEKAMWLWANVENLDNFLKDVYTYFLGNGIWSILLNRGLSLLTFAFVVGFSTFLTNCIDYRNFRGSRKMDDILIQQCTKKMSMSSTFLLWLLTVFWIGKAFQYLMDIRRLKHMHDFYYYLLGISDSEIQTISWQEVVSRLMTLRDANPATAGAVSARHRKFMGSQSKQRMDAHDIANRLMRKENYLIALVNKDILDLTLPIPFLRNRQLFSQTLEWNINLCIMDYVFNDQGQVRTLFLKDTHRKALSEGLRRRFIFAGIMNIFVAPFIVVYFLMHYFFRYFNEYKKNPAQIGSRQYTPLAEWKFREFNELWHLFERRVNMSYPFASRYVDQFPKDKTVQVAGFVAFVSGALASVLALVSIIDPELFLGFEITHDRTVLFYLGVFGSVWAFARGLVPEETNVFDPEFALLEVIDFTHYFPNHWKGRLHSDEVRKEFAVLYQMKIVIFLEEILSMIFTPFILWFSLPKCSDRLIDFFREFTVHVDGMGYLCSFAVFDFKKGTNVISQGGTGRRESGRQDLRADYFSTKDGKMLASYYGFLDNYGGNRPANPSSRRQFHPPPAFPTLGSPSAIEMGNIGERLERTQTRHGPAATFMGQQSGLGPGFGAAGFGDHASPAPSILLDPHHQPTASDFRTANRSALYPRFRSSRPVRPITDPIEDDNESPSAEIRRGAVKKSPHTTTGSSGGAIGTSDSNLGESWRMNLIGDELDKDTGEDGENVDEIAGNAGVLGLIQQFQKVSKDNRGRTTVGI</sequence>
<keyword id="KW-0072">Autophagy</keyword>
<keyword id="KW-0968">Cytoplasmic vesicle</keyword>
<keyword id="KW-0256">Endoplasmic reticulum</keyword>
<keyword id="KW-0333">Golgi apparatus</keyword>
<keyword id="KW-0445">Lipid transport</keyword>
<keyword id="KW-0472">Membrane</keyword>
<keyword id="KW-0597">Phosphoprotein</keyword>
<keyword id="KW-1185">Reference proteome</keyword>
<keyword id="KW-0812">Transmembrane</keyword>
<keyword id="KW-1133">Transmembrane helix</keyword>
<keyword id="KW-0813">Transport</keyword>
<protein>
    <recommendedName>
        <fullName>Autophagy-related protein 9</fullName>
    </recommendedName>
</protein>
<name>ATG9_ASPOR</name>
<gene>
    <name type="primary">atg9</name>
    <name type="ORF">AO090009000183</name>
</gene>
<organism>
    <name type="scientific">Aspergillus oryzae (strain ATCC 42149 / RIB 40)</name>
    <name type="common">Yellow koji mold</name>
    <dbReference type="NCBI Taxonomy" id="510516"/>
    <lineage>
        <taxon>Eukaryota</taxon>
        <taxon>Fungi</taxon>
        <taxon>Dikarya</taxon>
        <taxon>Ascomycota</taxon>
        <taxon>Pezizomycotina</taxon>
        <taxon>Eurotiomycetes</taxon>
        <taxon>Eurotiomycetidae</taxon>
        <taxon>Eurotiales</taxon>
        <taxon>Aspergillaceae</taxon>
        <taxon>Aspergillus</taxon>
        <taxon>Aspergillus subgen. Circumdati</taxon>
    </lineage>
</organism>
<evidence type="ECO:0000250" key="1">
    <source>
        <dbReference type="UniProtKB" id="O74312"/>
    </source>
</evidence>
<evidence type="ECO:0000250" key="2">
    <source>
        <dbReference type="UniProtKB" id="Q12142"/>
    </source>
</evidence>
<evidence type="ECO:0000255" key="3"/>
<evidence type="ECO:0000256" key="4">
    <source>
        <dbReference type="SAM" id="MobiDB-lite"/>
    </source>
</evidence>
<evidence type="ECO:0000305" key="5"/>
<proteinExistence type="inferred from homology"/>
<comment type="function">
    <text evidence="2">Phospholipid scramblase involved in autophagy and cytoplasm to vacuole transport (Cvt) vesicle formation. Cycles between the preautophagosomal structure/phagophore assembly site (PAS) and the cytoplasmic vesicle pool and supplies membrane for the growing autophagosome. Lipid scramblase activity plays a key role in preautophagosomal structure/phagophore assembly by distributing the phospholipids that arrive through atg2 from the cytoplasmic to the luminal leaflet of the bilayer, thereby driving autophagosomal membrane expansion. Required for mitophagy. Also involved in endoplasmic reticulum-specific autophagic process and is essential for the survival of cells subjected to severe ER stress. Different machineries are required for anterograde trafficking to the PAS during either the Cvt pathway or bulk autophagy and for retrograde trafficking.</text>
</comment>
<comment type="catalytic activity">
    <reaction evidence="2">
        <text>a 1,2-diacyl-sn-glycero-3-phosphocholine(in) = a 1,2-diacyl-sn-glycero-3-phosphocholine(out)</text>
        <dbReference type="Rhea" id="RHEA:38571"/>
        <dbReference type="ChEBI" id="CHEBI:57643"/>
    </reaction>
</comment>
<comment type="catalytic activity">
    <reaction evidence="2">
        <text>a 1,2-diacyl-sn-glycero-3-phospho-L-serine(in) = a 1,2-diacyl-sn-glycero-3-phospho-L-serine(out)</text>
        <dbReference type="Rhea" id="RHEA:38663"/>
        <dbReference type="ChEBI" id="CHEBI:57262"/>
    </reaction>
</comment>
<comment type="catalytic activity">
    <reaction evidence="2">
        <text>a 1,2-diacyl-sn-glycero-3-phosphoethanolamine(in) = a 1,2-diacyl-sn-glycero-3-phosphoethanolamine(out)</text>
        <dbReference type="Rhea" id="RHEA:38895"/>
        <dbReference type="ChEBI" id="CHEBI:64612"/>
    </reaction>
</comment>
<comment type="catalytic activity">
    <reaction evidence="2">
        <text>a 1,2-diacyl-sn-glycero-3-phospho-(1D-myo-inositol-3-phosphate)(in) = a 1,2-diacyl-sn-glycero-3-phospho-(1D-myo-inositol-3-phosphate)(out)</text>
        <dbReference type="Rhea" id="RHEA:67920"/>
        <dbReference type="ChEBI" id="CHEBI:58088"/>
    </reaction>
</comment>
<comment type="subunit">
    <text evidence="1">Homotrimer; forms a homotrimer with a central pore that forms a path between the two membrane leaflets.</text>
</comment>
<comment type="subcellular location">
    <subcellularLocation>
        <location evidence="2">Preautophagosomal structure membrane</location>
        <topology evidence="2">Multi-pass membrane protein</topology>
    </subcellularLocation>
    <subcellularLocation>
        <location evidence="2">Cytoplasmic vesicle membrane</location>
        <topology evidence="2">Multi-pass membrane protein</topology>
    </subcellularLocation>
    <subcellularLocation>
        <location evidence="2">Golgi apparatus membrane</location>
        <topology evidence="2">Multi-pass membrane protein</topology>
    </subcellularLocation>
    <subcellularLocation>
        <location evidence="2">Endoplasmic reticulum membrane</location>
        <topology evidence="2">Multi-pass membrane protein</topology>
    </subcellularLocation>
</comment>
<comment type="domain">
    <text evidence="1">Forms a homotrimer with a solvated central pore, which is connected laterally to the cytosol through the cavity within each protomer. Acts as a lipid scramblase that uses its central pore to function: the central pore opens laterally to accommodate lipid headgroups, thereby enabling lipid flipping and redistribution of lipids added to the outer leaflet of atg9-containing vesicles, thereby enabling growth into autophagosomes.</text>
</comment>
<comment type="PTM">
    <text evidence="2">Phosphorylated by atg1. Atg1 phosphorylation is required for preautophagosome elongation.</text>
</comment>
<comment type="similarity">
    <text evidence="5">Belongs to the ATG9 family.</text>
</comment>
<reference key="1">
    <citation type="journal article" date="2005" name="Nature">
        <title>Genome sequencing and analysis of Aspergillus oryzae.</title>
        <authorList>
            <person name="Machida M."/>
            <person name="Asai K."/>
            <person name="Sano M."/>
            <person name="Tanaka T."/>
            <person name="Kumagai T."/>
            <person name="Terai G."/>
            <person name="Kusumoto K."/>
            <person name="Arima T."/>
            <person name="Akita O."/>
            <person name="Kashiwagi Y."/>
            <person name="Abe K."/>
            <person name="Gomi K."/>
            <person name="Horiuchi H."/>
            <person name="Kitamoto K."/>
            <person name="Kobayashi T."/>
            <person name="Takeuchi M."/>
            <person name="Denning D.W."/>
            <person name="Galagan J.E."/>
            <person name="Nierman W.C."/>
            <person name="Yu J."/>
            <person name="Archer D.B."/>
            <person name="Bennett J.W."/>
            <person name="Bhatnagar D."/>
            <person name="Cleveland T.E."/>
            <person name="Fedorova N.D."/>
            <person name="Gotoh O."/>
            <person name="Horikawa H."/>
            <person name="Hosoyama A."/>
            <person name="Ichinomiya M."/>
            <person name="Igarashi R."/>
            <person name="Iwashita K."/>
            <person name="Juvvadi P.R."/>
            <person name="Kato M."/>
            <person name="Kato Y."/>
            <person name="Kin T."/>
            <person name="Kokubun A."/>
            <person name="Maeda H."/>
            <person name="Maeyama N."/>
            <person name="Maruyama J."/>
            <person name="Nagasaki H."/>
            <person name="Nakajima T."/>
            <person name="Oda K."/>
            <person name="Okada K."/>
            <person name="Paulsen I."/>
            <person name="Sakamoto K."/>
            <person name="Sawano T."/>
            <person name="Takahashi M."/>
            <person name="Takase K."/>
            <person name="Terabayashi Y."/>
            <person name="Wortman J.R."/>
            <person name="Yamada O."/>
            <person name="Yamagata Y."/>
            <person name="Anazawa H."/>
            <person name="Hata Y."/>
            <person name="Koide Y."/>
            <person name="Komori T."/>
            <person name="Koyama Y."/>
            <person name="Minetoki T."/>
            <person name="Suharnan S."/>
            <person name="Tanaka A."/>
            <person name="Isono K."/>
            <person name="Kuhara S."/>
            <person name="Ogasawara N."/>
            <person name="Kikuchi H."/>
        </authorList>
    </citation>
    <scope>NUCLEOTIDE SEQUENCE [LARGE SCALE GENOMIC DNA]</scope>
    <source>
        <strain>ATCC 42149 / RIB 40</strain>
    </source>
</reference>
<accession>Q2UUT6</accession>
<feature type="chain" id="PRO_0000317908" description="Autophagy-related protein 9">
    <location>
        <begin position="1"/>
        <end position="951"/>
    </location>
</feature>
<feature type="topological domain" description="Cytoplasmic" evidence="5">
    <location>
        <begin position="1"/>
        <end position="239"/>
    </location>
</feature>
<feature type="transmembrane region" description="Helical" evidence="3">
    <location>
        <begin position="240"/>
        <end position="260"/>
    </location>
</feature>
<feature type="topological domain" description="Lumenal" evidence="5">
    <location>
        <begin position="261"/>
        <end position="288"/>
    </location>
</feature>
<feature type="transmembrane region" description="Helical" evidence="3">
    <location>
        <begin position="289"/>
        <end position="309"/>
    </location>
</feature>
<feature type="topological domain" description="Cytoplasmic" evidence="5">
    <location>
        <begin position="310"/>
        <end position="455"/>
    </location>
</feature>
<feature type="intramembrane region" evidence="1">
    <location>
        <begin position="456"/>
        <end position="476"/>
    </location>
</feature>
<feature type="topological domain" description="Cytoplasmic" evidence="5">
    <location>
        <begin position="477"/>
        <end position="542"/>
    </location>
</feature>
<feature type="transmembrane region" description="Helical" evidence="3">
    <location>
        <begin position="543"/>
        <end position="563"/>
    </location>
</feature>
<feature type="topological domain" description="Lumenal" evidence="5">
    <location>
        <begin position="564"/>
        <end position="577"/>
    </location>
</feature>
<feature type="transmembrane region" description="Helical" evidence="3">
    <location>
        <begin position="578"/>
        <end position="598"/>
    </location>
</feature>
<feature type="topological domain" description="Cytoplasmic" evidence="5">
    <location>
        <begin position="599"/>
        <end position="644"/>
    </location>
</feature>
<feature type="intramembrane region" evidence="1">
    <location>
        <begin position="645"/>
        <end position="665"/>
    </location>
</feature>
<feature type="topological domain" description="Cytoplasmic" evidence="5">
    <location>
        <begin position="666"/>
        <end position="951"/>
    </location>
</feature>
<feature type="region of interest" description="Disordered" evidence="4">
    <location>
        <begin position="1"/>
        <end position="165"/>
    </location>
</feature>
<feature type="region of interest" description="Disordered" evidence="4">
    <location>
        <begin position="848"/>
        <end position="897"/>
    </location>
</feature>
<feature type="compositionally biased region" description="Polar residues" evidence="4">
    <location>
        <begin position="16"/>
        <end position="33"/>
    </location>
</feature>
<feature type="compositionally biased region" description="Basic and acidic residues" evidence="4">
    <location>
        <begin position="35"/>
        <end position="54"/>
    </location>
</feature>
<feature type="compositionally biased region" description="Polar residues" evidence="4">
    <location>
        <begin position="79"/>
        <end position="94"/>
    </location>
</feature>
<feature type="compositionally biased region" description="Basic residues" evidence="4">
    <location>
        <begin position="97"/>
        <end position="108"/>
    </location>
</feature>
<dbReference type="EMBL" id="BA000049">
    <property type="protein sequence ID" value="BAE54679.1"/>
    <property type="molecule type" value="Genomic_DNA"/>
</dbReference>
<dbReference type="SMR" id="Q2UUT6"/>
<dbReference type="STRING" id="510516.Q2UUT6"/>
<dbReference type="EnsemblFungi" id="BAE54679">
    <property type="protein sequence ID" value="BAE54679"/>
    <property type="gene ID" value="AO090009000183"/>
</dbReference>
<dbReference type="HOGENOM" id="CLU_006200_1_1_1"/>
<dbReference type="OMA" id="MMHYFFR"/>
<dbReference type="Proteomes" id="UP000006564">
    <property type="component" value="Chromosome 1"/>
</dbReference>
<dbReference type="GO" id="GO:0005776">
    <property type="term" value="C:autophagosome"/>
    <property type="evidence" value="ECO:0007669"/>
    <property type="project" value="TreeGrafter"/>
</dbReference>
<dbReference type="GO" id="GO:0030659">
    <property type="term" value="C:cytoplasmic vesicle membrane"/>
    <property type="evidence" value="ECO:0007669"/>
    <property type="project" value="UniProtKB-SubCell"/>
</dbReference>
<dbReference type="GO" id="GO:0005789">
    <property type="term" value="C:endoplasmic reticulum membrane"/>
    <property type="evidence" value="ECO:0007669"/>
    <property type="project" value="UniProtKB-SubCell"/>
</dbReference>
<dbReference type="GO" id="GO:0000139">
    <property type="term" value="C:Golgi membrane"/>
    <property type="evidence" value="ECO:0007669"/>
    <property type="project" value="UniProtKB-SubCell"/>
</dbReference>
<dbReference type="GO" id="GO:0005739">
    <property type="term" value="C:mitochondrion"/>
    <property type="evidence" value="ECO:0007669"/>
    <property type="project" value="EnsemblFungi"/>
</dbReference>
<dbReference type="GO" id="GO:0061908">
    <property type="term" value="C:phagophore"/>
    <property type="evidence" value="ECO:0007669"/>
    <property type="project" value="EnsemblFungi"/>
</dbReference>
<dbReference type="GO" id="GO:0034045">
    <property type="term" value="C:phagophore assembly site membrane"/>
    <property type="evidence" value="ECO:0007669"/>
    <property type="project" value="UniProtKB-SubCell"/>
</dbReference>
<dbReference type="GO" id="GO:0017128">
    <property type="term" value="F:phospholipid scramblase activity"/>
    <property type="evidence" value="ECO:0007669"/>
    <property type="project" value="EnsemblFungi"/>
</dbReference>
<dbReference type="GO" id="GO:0000423">
    <property type="term" value="P:mitophagy"/>
    <property type="evidence" value="ECO:0007669"/>
    <property type="project" value="EnsemblFungi"/>
</dbReference>
<dbReference type="GO" id="GO:0034727">
    <property type="term" value="P:piecemeal microautophagy of the nucleus"/>
    <property type="evidence" value="ECO:0007669"/>
    <property type="project" value="EnsemblFungi"/>
</dbReference>
<dbReference type="GO" id="GO:0034497">
    <property type="term" value="P:protein localization to phagophore assembly site"/>
    <property type="evidence" value="ECO:0007669"/>
    <property type="project" value="EnsemblFungi"/>
</dbReference>
<dbReference type="GO" id="GO:0061709">
    <property type="term" value="P:reticulophagy"/>
    <property type="evidence" value="ECO:0007669"/>
    <property type="project" value="EnsemblFungi"/>
</dbReference>
<dbReference type="InterPro" id="IPR007241">
    <property type="entry name" value="Autophagy-rel_prot_9"/>
</dbReference>
<dbReference type="PANTHER" id="PTHR13038">
    <property type="entry name" value="APG9 AUTOPHAGY 9"/>
    <property type="match status" value="1"/>
</dbReference>
<dbReference type="PANTHER" id="PTHR13038:SF10">
    <property type="entry name" value="AUTOPHAGY-RELATED PROTEIN 9"/>
    <property type="match status" value="1"/>
</dbReference>
<dbReference type="Pfam" id="PF04109">
    <property type="entry name" value="ATG9"/>
    <property type="match status" value="1"/>
</dbReference>